<organism>
    <name type="scientific">Bacillus subtilis (strain 168)</name>
    <dbReference type="NCBI Taxonomy" id="224308"/>
    <lineage>
        <taxon>Bacteria</taxon>
        <taxon>Bacillati</taxon>
        <taxon>Bacillota</taxon>
        <taxon>Bacilli</taxon>
        <taxon>Bacillales</taxon>
        <taxon>Bacillaceae</taxon>
        <taxon>Bacillus</taxon>
    </lineage>
</organism>
<reference key="1">
    <citation type="journal article" date="1993" name="J. Bacteriol.">
        <title>Cloning, nucleotide sequence, and regulation of the Bacillus subtilis nadB gene and a nifS-like gene, both of which are essential for NAD biosynthesis.</title>
        <authorList>
            <person name="Sun D."/>
            <person name="Setlow P.L."/>
        </authorList>
    </citation>
    <scope>NUCLEOTIDE SEQUENCE [GENOMIC DNA]</scope>
    <scope>PATHWAY</scope>
    <scope>INDUCTION</scope>
    <scope>DISRUPTION PHENOTYPE</scope>
    <source>
        <strain>168</strain>
    </source>
</reference>
<reference key="2">
    <citation type="journal article" date="1997" name="Nature">
        <title>The complete genome sequence of the Gram-positive bacterium Bacillus subtilis.</title>
        <authorList>
            <person name="Kunst F."/>
            <person name="Ogasawara N."/>
            <person name="Moszer I."/>
            <person name="Albertini A.M."/>
            <person name="Alloni G."/>
            <person name="Azevedo V."/>
            <person name="Bertero M.G."/>
            <person name="Bessieres P."/>
            <person name="Bolotin A."/>
            <person name="Borchert S."/>
            <person name="Borriss R."/>
            <person name="Boursier L."/>
            <person name="Brans A."/>
            <person name="Braun M."/>
            <person name="Brignell S.C."/>
            <person name="Bron S."/>
            <person name="Brouillet S."/>
            <person name="Bruschi C.V."/>
            <person name="Caldwell B."/>
            <person name="Capuano V."/>
            <person name="Carter N.M."/>
            <person name="Choi S.-K."/>
            <person name="Codani J.-J."/>
            <person name="Connerton I.F."/>
            <person name="Cummings N.J."/>
            <person name="Daniel R.A."/>
            <person name="Denizot F."/>
            <person name="Devine K.M."/>
            <person name="Duesterhoeft A."/>
            <person name="Ehrlich S.D."/>
            <person name="Emmerson P.T."/>
            <person name="Entian K.-D."/>
            <person name="Errington J."/>
            <person name="Fabret C."/>
            <person name="Ferrari E."/>
            <person name="Foulger D."/>
            <person name="Fritz C."/>
            <person name="Fujita M."/>
            <person name="Fujita Y."/>
            <person name="Fuma S."/>
            <person name="Galizzi A."/>
            <person name="Galleron N."/>
            <person name="Ghim S.-Y."/>
            <person name="Glaser P."/>
            <person name="Goffeau A."/>
            <person name="Golightly E.J."/>
            <person name="Grandi G."/>
            <person name="Guiseppi G."/>
            <person name="Guy B.J."/>
            <person name="Haga K."/>
            <person name="Haiech J."/>
            <person name="Harwood C.R."/>
            <person name="Henaut A."/>
            <person name="Hilbert H."/>
            <person name="Holsappel S."/>
            <person name="Hosono S."/>
            <person name="Hullo M.-F."/>
            <person name="Itaya M."/>
            <person name="Jones L.-M."/>
            <person name="Joris B."/>
            <person name="Karamata D."/>
            <person name="Kasahara Y."/>
            <person name="Klaerr-Blanchard M."/>
            <person name="Klein C."/>
            <person name="Kobayashi Y."/>
            <person name="Koetter P."/>
            <person name="Koningstein G."/>
            <person name="Krogh S."/>
            <person name="Kumano M."/>
            <person name="Kurita K."/>
            <person name="Lapidus A."/>
            <person name="Lardinois S."/>
            <person name="Lauber J."/>
            <person name="Lazarevic V."/>
            <person name="Lee S.-M."/>
            <person name="Levine A."/>
            <person name="Liu H."/>
            <person name="Masuda S."/>
            <person name="Mauel C."/>
            <person name="Medigue C."/>
            <person name="Medina N."/>
            <person name="Mellado R.P."/>
            <person name="Mizuno M."/>
            <person name="Moestl D."/>
            <person name="Nakai S."/>
            <person name="Noback M."/>
            <person name="Noone D."/>
            <person name="O'Reilly M."/>
            <person name="Ogawa K."/>
            <person name="Ogiwara A."/>
            <person name="Oudega B."/>
            <person name="Park S.-H."/>
            <person name="Parro V."/>
            <person name="Pohl T.M."/>
            <person name="Portetelle D."/>
            <person name="Porwollik S."/>
            <person name="Prescott A.M."/>
            <person name="Presecan E."/>
            <person name="Pujic P."/>
            <person name="Purnelle B."/>
            <person name="Rapoport G."/>
            <person name="Rey M."/>
            <person name="Reynolds S."/>
            <person name="Rieger M."/>
            <person name="Rivolta C."/>
            <person name="Rocha E."/>
            <person name="Roche B."/>
            <person name="Rose M."/>
            <person name="Sadaie Y."/>
            <person name="Sato T."/>
            <person name="Scanlan E."/>
            <person name="Schleich S."/>
            <person name="Schroeter R."/>
            <person name="Scoffone F."/>
            <person name="Sekiguchi J."/>
            <person name="Sekowska A."/>
            <person name="Seror S.J."/>
            <person name="Serror P."/>
            <person name="Shin B.-S."/>
            <person name="Soldo B."/>
            <person name="Sorokin A."/>
            <person name="Tacconi E."/>
            <person name="Takagi T."/>
            <person name="Takahashi H."/>
            <person name="Takemaru K."/>
            <person name="Takeuchi M."/>
            <person name="Tamakoshi A."/>
            <person name="Tanaka T."/>
            <person name="Terpstra P."/>
            <person name="Tognoni A."/>
            <person name="Tosato V."/>
            <person name="Uchiyama S."/>
            <person name="Vandenbol M."/>
            <person name="Vannier F."/>
            <person name="Vassarotti A."/>
            <person name="Viari A."/>
            <person name="Wambutt R."/>
            <person name="Wedler E."/>
            <person name="Wedler H."/>
            <person name="Weitzenegger T."/>
            <person name="Winters P."/>
            <person name="Wipat A."/>
            <person name="Yamamoto H."/>
            <person name="Yamane K."/>
            <person name="Yasumoto K."/>
            <person name="Yata K."/>
            <person name="Yoshida K."/>
            <person name="Yoshikawa H.-F."/>
            <person name="Zumstein E."/>
            <person name="Yoshikawa H."/>
            <person name="Danchin A."/>
        </authorList>
    </citation>
    <scope>NUCLEOTIDE SEQUENCE [LARGE SCALE GENOMIC DNA]</scope>
    <source>
        <strain>168</strain>
    </source>
</reference>
<reference key="3">
    <citation type="journal article" date="2008" name="FEBS J.">
        <title>Characterization of L-aspartate oxidase and quinolinate synthase from Bacillus subtilis.</title>
        <authorList>
            <person name="Marinoni I."/>
            <person name="Nonnis S."/>
            <person name="Monteferrante C."/>
            <person name="Heathcote P."/>
            <person name="Haertig E."/>
            <person name="Boettger L.H."/>
            <person name="Trautwein A.X."/>
            <person name="Negri A."/>
            <person name="Albertini A.M."/>
            <person name="Tedeschi G."/>
        </authorList>
    </citation>
    <scope>FUNCTION</scope>
    <scope>CATALYTIC ACTIVITY</scope>
    <scope>COFACTOR</scope>
    <scope>BIOPHYSICOCHEMICAL PROPERTIES</scope>
    <scope>PATHWAY</scope>
    <scope>SUBUNIT</scope>
</reference>
<feature type="chain" id="PRO_0000184380" description="L-aspartate oxidase">
    <location>
        <begin position="1"/>
        <end position="531"/>
    </location>
</feature>
<feature type="active site" description="Proton donor/acceptor" evidence="1">
    <location>
        <position position="272"/>
    </location>
</feature>
<feature type="binding site" evidence="1">
    <location>
        <begin position="11"/>
        <end position="14"/>
    </location>
    <ligand>
        <name>FAD</name>
        <dbReference type="ChEBI" id="CHEBI:57692"/>
    </ligand>
</feature>
<feature type="binding site" evidence="1">
    <location>
        <position position="33"/>
    </location>
    <ligand>
        <name>FAD</name>
        <dbReference type="ChEBI" id="CHEBI:57692"/>
    </ligand>
</feature>
<feature type="binding site" evidence="1">
    <location>
        <begin position="40"/>
        <end position="47"/>
    </location>
    <ligand>
        <name>FAD</name>
        <dbReference type="ChEBI" id="CHEBI:57692"/>
    </ligand>
</feature>
<feature type="binding site" evidence="1">
    <location>
        <begin position="151"/>
        <end position="152"/>
    </location>
    <ligand>
        <name>FAD</name>
        <dbReference type="ChEBI" id="CHEBI:57692"/>
    </ligand>
</feature>
<feature type="binding site" evidence="1">
    <location>
        <position position="205"/>
    </location>
    <ligand>
        <name>FAD</name>
        <dbReference type="ChEBI" id="CHEBI:57692"/>
    </ligand>
</feature>
<feature type="binding site" evidence="1">
    <location>
        <position position="353"/>
    </location>
    <ligand>
        <name>FAD</name>
        <dbReference type="ChEBI" id="CHEBI:57692"/>
    </ligand>
</feature>
<feature type="binding site" evidence="1">
    <location>
        <begin position="369"/>
        <end position="370"/>
    </location>
    <ligand>
        <name>FAD</name>
        <dbReference type="ChEBI" id="CHEBI:57692"/>
    </ligand>
</feature>
<feature type="site" description="Important in orienting the L-aspartate substrate" evidence="1">
    <location>
        <position position="112"/>
    </location>
</feature>
<dbReference type="EC" id="1.4.3.16" evidence="2"/>
<dbReference type="EC" id="1.5.99.-" evidence="2"/>
<dbReference type="EMBL" id="M98822">
    <property type="protein sequence ID" value="AAA21614.1"/>
    <property type="molecule type" value="Genomic_DNA"/>
</dbReference>
<dbReference type="EMBL" id="AL009126">
    <property type="protein sequence ID" value="CAB14747.1"/>
    <property type="molecule type" value="Genomic_DNA"/>
</dbReference>
<dbReference type="PIR" id="C47071">
    <property type="entry name" value="C47071"/>
</dbReference>
<dbReference type="RefSeq" id="NP_390665.1">
    <property type="nucleotide sequence ID" value="NC_000964.3"/>
</dbReference>
<dbReference type="RefSeq" id="WP_003229687.1">
    <property type="nucleotide sequence ID" value="NZ_OZ025638.1"/>
</dbReference>
<dbReference type="SMR" id="P38032"/>
<dbReference type="FunCoup" id="P38032">
    <property type="interactions" value="465"/>
</dbReference>
<dbReference type="STRING" id="224308.BSU27870"/>
<dbReference type="PaxDb" id="224308-BSU27870"/>
<dbReference type="EnsemblBacteria" id="CAB14747">
    <property type="protein sequence ID" value="CAB14747"/>
    <property type="gene ID" value="BSU_27870"/>
</dbReference>
<dbReference type="GeneID" id="938051"/>
<dbReference type="KEGG" id="bsu:BSU27870"/>
<dbReference type="PATRIC" id="fig|224308.179.peg.3028"/>
<dbReference type="eggNOG" id="COG0029">
    <property type="taxonomic scope" value="Bacteria"/>
</dbReference>
<dbReference type="InParanoid" id="P38032"/>
<dbReference type="OrthoDB" id="9806724at2"/>
<dbReference type="PhylomeDB" id="P38032"/>
<dbReference type="BioCyc" id="BSUB:BSU27870-MONOMER"/>
<dbReference type="BRENDA" id="1.4.3.16">
    <property type="organism ID" value="658"/>
</dbReference>
<dbReference type="UniPathway" id="UPA00253">
    <property type="reaction ID" value="UER00326"/>
</dbReference>
<dbReference type="Proteomes" id="UP000001570">
    <property type="component" value="Chromosome"/>
</dbReference>
<dbReference type="GO" id="GO:0005737">
    <property type="term" value="C:cytoplasm"/>
    <property type="evidence" value="ECO:0007669"/>
    <property type="project" value="UniProtKB-SubCell"/>
</dbReference>
<dbReference type="GO" id="GO:0008734">
    <property type="term" value="F:L-aspartate oxidase activity"/>
    <property type="evidence" value="ECO:0000318"/>
    <property type="project" value="GO_Central"/>
</dbReference>
<dbReference type="GO" id="GO:0000166">
    <property type="term" value="F:nucleotide binding"/>
    <property type="evidence" value="ECO:0007669"/>
    <property type="project" value="UniProtKB-KW"/>
</dbReference>
<dbReference type="GO" id="GO:0033765">
    <property type="term" value="F:steroid dehydrogenase activity, acting on the CH-CH group of donors"/>
    <property type="evidence" value="ECO:0007669"/>
    <property type="project" value="UniProtKB-ARBA"/>
</dbReference>
<dbReference type="GO" id="GO:0034628">
    <property type="term" value="P:'de novo' NAD biosynthetic process from L-aspartate"/>
    <property type="evidence" value="ECO:0000318"/>
    <property type="project" value="GO_Central"/>
</dbReference>
<dbReference type="FunFam" id="3.90.700.10:FF:000002">
    <property type="entry name" value="L-aspartate oxidase"/>
    <property type="match status" value="1"/>
</dbReference>
<dbReference type="Gene3D" id="3.50.50.60">
    <property type="entry name" value="FAD/NAD(P)-binding domain"/>
    <property type="match status" value="1"/>
</dbReference>
<dbReference type="Gene3D" id="1.20.58.100">
    <property type="entry name" value="Fumarate reductase/succinate dehydrogenase flavoprotein-like, C-terminal domain"/>
    <property type="match status" value="1"/>
</dbReference>
<dbReference type="Gene3D" id="3.90.700.10">
    <property type="entry name" value="Succinate dehydrogenase/fumarate reductase flavoprotein, catalytic domain"/>
    <property type="match status" value="1"/>
</dbReference>
<dbReference type="InterPro" id="IPR003953">
    <property type="entry name" value="FAD-dep_OxRdtase_2_FAD-bd"/>
</dbReference>
<dbReference type="InterPro" id="IPR036188">
    <property type="entry name" value="FAD/NAD-bd_sf"/>
</dbReference>
<dbReference type="InterPro" id="IPR037099">
    <property type="entry name" value="Fum_R/Succ_DH_flav-like_C_sf"/>
</dbReference>
<dbReference type="InterPro" id="IPR015939">
    <property type="entry name" value="Fum_Rdtase/Succ_DH_flav-like_C"/>
</dbReference>
<dbReference type="InterPro" id="IPR005288">
    <property type="entry name" value="NadB"/>
</dbReference>
<dbReference type="InterPro" id="IPR027477">
    <property type="entry name" value="Succ_DH/fumarate_Rdtase_cat_sf"/>
</dbReference>
<dbReference type="NCBIfam" id="TIGR00551">
    <property type="entry name" value="nadB"/>
    <property type="match status" value="1"/>
</dbReference>
<dbReference type="NCBIfam" id="NF005978">
    <property type="entry name" value="PRK08071.1"/>
    <property type="match status" value="1"/>
</dbReference>
<dbReference type="PANTHER" id="PTHR42716">
    <property type="entry name" value="L-ASPARTATE OXIDASE"/>
    <property type="match status" value="1"/>
</dbReference>
<dbReference type="PANTHER" id="PTHR42716:SF2">
    <property type="entry name" value="L-ASPARTATE OXIDASE, CHLOROPLASTIC"/>
    <property type="match status" value="1"/>
</dbReference>
<dbReference type="Pfam" id="PF00890">
    <property type="entry name" value="FAD_binding_2"/>
    <property type="match status" value="1"/>
</dbReference>
<dbReference type="Pfam" id="PF02910">
    <property type="entry name" value="Succ_DH_flav_C"/>
    <property type="match status" value="1"/>
</dbReference>
<dbReference type="PRINTS" id="PR00368">
    <property type="entry name" value="FADPNR"/>
</dbReference>
<dbReference type="SUPFAM" id="SSF51905">
    <property type="entry name" value="FAD/NAD(P)-binding domain"/>
    <property type="match status" value="1"/>
</dbReference>
<dbReference type="SUPFAM" id="SSF46977">
    <property type="entry name" value="Succinate dehydrogenase/fumarate reductase flavoprotein C-terminal domain"/>
    <property type="match status" value="1"/>
</dbReference>
<dbReference type="SUPFAM" id="SSF56425">
    <property type="entry name" value="Succinate dehydrogenase/fumarate reductase flavoprotein, catalytic domain"/>
    <property type="match status" value="1"/>
</dbReference>
<sequence length="531" mass="58239">MSKKTIAVIGSGAAALSLAAAFPPSYEVTVITKKSVKNSNSVYAQGGIAAAYAKDDSIEAHLEDTLYAGCGHNNLAIVADVLHDGKMMVQSLLERGFPFDRNERGGVCLGREGAHSYNRIFHAGGDATGRLLIDYLLKRINSKIKLIENETAADLLIEDGRCIGVMTKDSKGRLKVRHADEVVLAAGGCGNLFLHHTNDLTVTGDGLSLAYRAGAELTDLEFTQFHPTLLVKNGVSYGLVSEAVRGEGGCLVDENGRRIMAERHPLGDLAPRDIVSRVIHEEMAKGNRVYIDFSAISDFETRFPTITAICEKAGIDIHSGKIPVAPGMHFLMGGVSVNRWGETTVPGLYAIGETACSGLHGANRLASNSLLEALVFGKRAAEHIIQKPVYNRQYQSGLETSVFYEVPDIEGHELQSKMTSHMSILREQSSLIELSIWLHTLPFQEVNVKDITIRQMELSHLWQTAKLMTFSALLREESRGAHFRTDFPHAEVSWQGRQIVHTKKGTKIRKNEGIWNNESFTAEKITESLFS</sequence>
<protein>
    <recommendedName>
        <fullName evidence="5">L-aspartate oxidase</fullName>
        <shortName evidence="6">LASPO</shortName>
        <ecNumber evidence="2">1.4.3.16</ecNumber>
    </recommendedName>
    <alternativeName>
        <fullName evidence="4">L-aspartate:fumarate oxidoreductase</fullName>
        <ecNumber evidence="2">1.5.99.-</ecNumber>
    </alternativeName>
    <alternativeName>
        <fullName>Quinolinate synthase B</fullName>
    </alternativeName>
</protein>
<proteinExistence type="evidence at protein level"/>
<comment type="function">
    <text evidence="2">Catalyzes the oxidation of L-aspartate to iminoaspartate, the first step in the de novo biosynthesis of NAD(+) (PubMed:18959769). Can use either oxygen or fumarate as electron acceptors, which allows the enzyme to be functional under aerobic and anaerobic conditions (PubMed:18959769).</text>
</comment>
<comment type="catalytic activity">
    <reaction evidence="2">
        <text>L-aspartate + O2 = iminosuccinate + H2O2</text>
        <dbReference type="Rhea" id="RHEA:25876"/>
        <dbReference type="ChEBI" id="CHEBI:15379"/>
        <dbReference type="ChEBI" id="CHEBI:16240"/>
        <dbReference type="ChEBI" id="CHEBI:29991"/>
        <dbReference type="ChEBI" id="CHEBI:77875"/>
        <dbReference type="EC" id="1.4.3.16"/>
    </reaction>
    <physiologicalReaction direction="left-to-right" evidence="2">
        <dbReference type="Rhea" id="RHEA:25877"/>
    </physiologicalReaction>
</comment>
<comment type="catalytic activity">
    <reaction evidence="2">
        <text>fumarate + L-aspartate = iminosuccinate + succinate</text>
        <dbReference type="Rhea" id="RHEA:30043"/>
        <dbReference type="ChEBI" id="CHEBI:29806"/>
        <dbReference type="ChEBI" id="CHEBI:29991"/>
        <dbReference type="ChEBI" id="CHEBI:30031"/>
        <dbReference type="ChEBI" id="CHEBI:77875"/>
    </reaction>
    <physiologicalReaction direction="left-to-right" evidence="2">
        <dbReference type="Rhea" id="RHEA:30044"/>
    </physiologicalReaction>
</comment>
<comment type="cofactor">
    <cofactor evidence="2">
        <name>FAD</name>
        <dbReference type="ChEBI" id="CHEBI:57692"/>
    </cofactor>
    <text evidence="1">Binds 1 FAD per subunit.</text>
</comment>
<comment type="biophysicochemical properties">
    <kinetics>
        <KM evidence="2">1 mM for L-aspartate (for L-aspartate:oxygen oxidoreductase activity)</KM>
        <KM evidence="2">20 mM for L-aspartate (for L-aspartate:fumarate oxidoreductase activity)</KM>
        <KM evidence="2">1.6 mM for fumarate (for fumarate reductase activity)</KM>
        <KM evidence="2">1.43 mM for fumarate (for L-aspartate:fumarate oxidoreductase activity)</KM>
        <text evidence="2">kcat is 0.18 sec(-1) for L-aspartate:oxygen oxidoreductase activity. kcat is 15.4 sec(-1) for fumarate reductase activity. kcat is 0.50 sec(-1) for L-aspartate:fumarate oxidoreductase activity.</text>
    </kinetics>
</comment>
<comment type="pathway">
    <text evidence="2 7">Cofactor biosynthesis; NAD(+) biosynthesis; iminoaspartate from L-aspartate (oxidase route): step 1/1.</text>
</comment>
<comment type="subunit">
    <text evidence="2">Monomer. Homodimer.</text>
</comment>
<comment type="subcellular location">
    <subcellularLocation>
        <location evidence="6">Cytoplasm</location>
    </subcellularLocation>
</comment>
<comment type="induction">
    <text evidence="3">Expression is repressed in the presence of nicotinic acid.</text>
</comment>
<comment type="disruption phenotype">
    <text evidence="3">Mutant requires exogenous nicotinic acid for growth.</text>
</comment>
<comment type="similarity">
    <text evidence="6">Belongs to the FAD-dependent oxidoreductase 2 family. NadB subfamily.</text>
</comment>
<accession>P38032</accession>
<evidence type="ECO:0000250" key="1">
    <source>
        <dbReference type="UniProtKB" id="P10902"/>
    </source>
</evidence>
<evidence type="ECO:0000269" key="2">
    <source>
    </source>
</evidence>
<evidence type="ECO:0000269" key="3">
    <source>
    </source>
</evidence>
<evidence type="ECO:0000303" key="4">
    <source>
    </source>
</evidence>
<evidence type="ECO:0000303" key="5">
    <source>
    </source>
</evidence>
<evidence type="ECO:0000305" key="6"/>
<evidence type="ECO:0000305" key="7">
    <source>
    </source>
</evidence>
<gene>
    <name evidence="5" type="primary">nadB</name>
    <name type="ordered locus">BSU27870</name>
</gene>
<keyword id="KW-0963">Cytoplasm</keyword>
<keyword id="KW-0274">FAD</keyword>
<keyword id="KW-0285">Flavoprotein</keyword>
<keyword id="KW-0547">Nucleotide-binding</keyword>
<keyword id="KW-0560">Oxidoreductase</keyword>
<keyword id="KW-0662">Pyridine nucleotide biosynthesis</keyword>
<keyword id="KW-1185">Reference proteome</keyword>
<name>NADB_BACSU</name>